<dbReference type="EC" id="2.8.1.6" evidence="1"/>
<dbReference type="EMBL" id="CP001101">
    <property type="protein sequence ID" value="ACE05352.1"/>
    <property type="molecule type" value="Genomic_DNA"/>
</dbReference>
<dbReference type="SMR" id="B3EPW2"/>
<dbReference type="STRING" id="331678.Cphamn1_2458"/>
<dbReference type="KEGG" id="cpb:Cphamn1_2458"/>
<dbReference type="eggNOG" id="COG0502">
    <property type="taxonomic scope" value="Bacteria"/>
</dbReference>
<dbReference type="HOGENOM" id="CLU_033172_2_1_10"/>
<dbReference type="OrthoDB" id="9786826at2"/>
<dbReference type="UniPathway" id="UPA00078">
    <property type="reaction ID" value="UER00162"/>
</dbReference>
<dbReference type="GO" id="GO:0051537">
    <property type="term" value="F:2 iron, 2 sulfur cluster binding"/>
    <property type="evidence" value="ECO:0007669"/>
    <property type="project" value="UniProtKB-KW"/>
</dbReference>
<dbReference type="GO" id="GO:0051539">
    <property type="term" value="F:4 iron, 4 sulfur cluster binding"/>
    <property type="evidence" value="ECO:0007669"/>
    <property type="project" value="UniProtKB-KW"/>
</dbReference>
<dbReference type="GO" id="GO:0004076">
    <property type="term" value="F:biotin synthase activity"/>
    <property type="evidence" value="ECO:0007669"/>
    <property type="project" value="UniProtKB-UniRule"/>
</dbReference>
<dbReference type="GO" id="GO:0005506">
    <property type="term" value="F:iron ion binding"/>
    <property type="evidence" value="ECO:0007669"/>
    <property type="project" value="UniProtKB-UniRule"/>
</dbReference>
<dbReference type="GO" id="GO:0009102">
    <property type="term" value="P:biotin biosynthetic process"/>
    <property type="evidence" value="ECO:0007669"/>
    <property type="project" value="UniProtKB-UniRule"/>
</dbReference>
<dbReference type="CDD" id="cd01335">
    <property type="entry name" value="Radical_SAM"/>
    <property type="match status" value="1"/>
</dbReference>
<dbReference type="Gene3D" id="3.20.20.70">
    <property type="entry name" value="Aldolase class I"/>
    <property type="match status" value="1"/>
</dbReference>
<dbReference type="HAMAP" id="MF_01694">
    <property type="entry name" value="BioB"/>
    <property type="match status" value="1"/>
</dbReference>
<dbReference type="InterPro" id="IPR013785">
    <property type="entry name" value="Aldolase_TIM"/>
</dbReference>
<dbReference type="InterPro" id="IPR010722">
    <property type="entry name" value="BATS_dom"/>
</dbReference>
<dbReference type="InterPro" id="IPR002684">
    <property type="entry name" value="Biotin_synth/BioAB"/>
</dbReference>
<dbReference type="InterPro" id="IPR024177">
    <property type="entry name" value="Biotin_synthase"/>
</dbReference>
<dbReference type="InterPro" id="IPR006638">
    <property type="entry name" value="Elp3/MiaA/NifB-like_rSAM"/>
</dbReference>
<dbReference type="InterPro" id="IPR007197">
    <property type="entry name" value="rSAM"/>
</dbReference>
<dbReference type="NCBIfam" id="TIGR00433">
    <property type="entry name" value="bioB"/>
    <property type="match status" value="1"/>
</dbReference>
<dbReference type="PANTHER" id="PTHR22976">
    <property type="entry name" value="BIOTIN SYNTHASE"/>
    <property type="match status" value="1"/>
</dbReference>
<dbReference type="PANTHER" id="PTHR22976:SF2">
    <property type="entry name" value="BIOTIN SYNTHASE, MITOCHONDRIAL"/>
    <property type="match status" value="1"/>
</dbReference>
<dbReference type="Pfam" id="PF06968">
    <property type="entry name" value="BATS"/>
    <property type="match status" value="1"/>
</dbReference>
<dbReference type="Pfam" id="PF04055">
    <property type="entry name" value="Radical_SAM"/>
    <property type="match status" value="1"/>
</dbReference>
<dbReference type="PIRSF" id="PIRSF001619">
    <property type="entry name" value="Biotin_synth"/>
    <property type="match status" value="1"/>
</dbReference>
<dbReference type="SFLD" id="SFLDG01278">
    <property type="entry name" value="biotin_synthase_like"/>
    <property type="match status" value="1"/>
</dbReference>
<dbReference type="SFLD" id="SFLDS00029">
    <property type="entry name" value="Radical_SAM"/>
    <property type="match status" value="1"/>
</dbReference>
<dbReference type="SMART" id="SM00876">
    <property type="entry name" value="BATS"/>
    <property type="match status" value="1"/>
</dbReference>
<dbReference type="SMART" id="SM00729">
    <property type="entry name" value="Elp3"/>
    <property type="match status" value="1"/>
</dbReference>
<dbReference type="SUPFAM" id="SSF102114">
    <property type="entry name" value="Radical SAM enzymes"/>
    <property type="match status" value="1"/>
</dbReference>
<dbReference type="PROSITE" id="PS51918">
    <property type="entry name" value="RADICAL_SAM"/>
    <property type="match status" value="1"/>
</dbReference>
<evidence type="ECO:0000255" key="1">
    <source>
        <dbReference type="HAMAP-Rule" id="MF_01694"/>
    </source>
</evidence>
<evidence type="ECO:0000255" key="2">
    <source>
        <dbReference type="PROSITE-ProRule" id="PRU01266"/>
    </source>
</evidence>
<proteinExistence type="inferred from homology"/>
<protein>
    <recommendedName>
        <fullName evidence="1">Biotin synthase</fullName>
        <ecNumber evidence="1">2.8.1.6</ecNumber>
    </recommendedName>
</protein>
<comment type="function">
    <text evidence="1">Catalyzes the conversion of dethiobiotin (DTB) to biotin by the insertion of a sulfur atom into dethiobiotin via a radical-based mechanism.</text>
</comment>
<comment type="catalytic activity">
    <reaction evidence="1">
        <text>(4R,5S)-dethiobiotin + (sulfur carrier)-SH + 2 reduced [2Fe-2S]-[ferredoxin] + 2 S-adenosyl-L-methionine = (sulfur carrier)-H + biotin + 2 5'-deoxyadenosine + 2 L-methionine + 2 oxidized [2Fe-2S]-[ferredoxin]</text>
        <dbReference type="Rhea" id="RHEA:22060"/>
        <dbReference type="Rhea" id="RHEA-COMP:10000"/>
        <dbReference type="Rhea" id="RHEA-COMP:10001"/>
        <dbReference type="Rhea" id="RHEA-COMP:14737"/>
        <dbReference type="Rhea" id="RHEA-COMP:14739"/>
        <dbReference type="ChEBI" id="CHEBI:17319"/>
        <dbReference type="ChEBI" id="CHEBI:29917"/>
        <dbReference type="ChEBI" id="CHEBI:33737"/>
        <dbReference type="ChEBI" id="CHEBI:33738"/>
        <dbReference type="ChEBI" id="CHEBI:57586"/>
        <dbReference type="ChEBI" id="CHEBI:57844"/>
        <dbReference type="ChEBI" id="CHEBI:59789"/>
        <dbReference type="ChEBI" id="CHEBI:64428"/>
        <dbReference type="ChEBI" id="CHEBI:149473"/>
        <dbReference type="EC" id="2.8.1.6"/>
    </reaction>
</comment>
<comment type="cofactor">
    <cofactor evidence="1">
        <name>[4Fe-4S] cluster</name>
        <dbReference type="ChEBI" id="CHEBI:49883"/>
    </cofactor>
    <text evidence="1">Binds 1 [4Fe-4S] cluster. The cluster is coordinated with 3 cysteines and an exchangeable S-adenosyl-L-methionine.</text>
</comment>
<comment type="cofactor">
    <cofactor evidence="1">
        <name>[2Fe-2S] cluster</name>
        <dbReference type="ChEBI" id="CHEBI:190135"/>
    </cofactor>
    <text evidence="1">Binds 1 [2Fe-2S] cluster. The cluster is coordinated with 3 cysteines and 1 arginine.</text>
</comment>
<comment type="pathway">
    <text evidence="1">Cofactor biosynthesis; biotin biosynthesis; biotin from 7,8-diaminononanoate: step 2/2.</text>
</comment>
<comment type="subunit">
    <text evidence="1">Homodimer.</text>
</comment>
<comment type="similarity">
    <text evidence="1">Belongs to the radical SAM superfamily. Biotin synthase family.</text>
</comment>
<gene>
    <name evidence="1" type="primary">bioB</name>
    <name type="ordered locus">Cphamn1_2458</name>
</gene>
<feature type="chain" id="PRO_0000381301" description="Biotin synthase">
    <location>
        <begin position="1"/>
        <end position="339"/>
    </location>
</feature>
<feature type="domain" description="Radical SAM core" evidence="2">
    <location>
        <begin position="55"/>
        <end position="288"/>
    </location>
</feature>
<feature type="binding site" evidence="1">
    <location>
        <position position="73"/>
    </location>
    <ligand>
        <name>[4Fe-4S] cluster</name>
        <dbReference type="ChEBI" id="CHEBI:49883"/>
        <note>4Fe-4S-S-AdoMet</note>
    </ligand>
</feature>
<feature type="binding site" evidence="1">
    <location>
        <position position="77"/>
    </location>
    <ligand>
        <name>[4Fe-4S] cluster</name>
        <dbReference type="ChEBI" id="CHEBI:49883"/>
        <note>4Fe-4S-S-AdoMet</note>
    </ligand>
</feature>
<feature type="binding site" evidence="1">
    <location>
        <position position="80"/>
    </location>
    <ligand>
        <name>[4Fe-4S] cluster</name>
        <dbReference type="ChEBI" id="CHEBI:49883"/>
        <note>4Fe-4S-S-AdoMet</note>
    </ligand>
</feature>
<feature type="binding site" evidence="1">
    <location>
        <position position="152"/>
    </location>
    <ligand>
        <name>[2Fe-2S] cluster</name>
        <dbReference type="ChEBI" id="CHEBI:190135"/>
    </ligand>
</feature>
<feature type="binding site" evidence="1">
    <location>
        <position position="213"/>
    </location>
    <ligand>
        <name>[2Fe-2S] cluster</name>
        <dbReference type="ChEBI" id="CHEBI:190135"/>
    </ligand>
</feature>
<feature type="binding site" evidence="1">
    <location>
        <position position="283"/>
    </location>
    <ligand>
        <name>[2Fe-2S] cluster</name>
        <dbReference type="ChEBI" id="CHEBI:190135"/>
    </ligand>
</feature>
<keyword id="KW-0001">2Fe-2S</keyword>
<keyword id="KW-0004">4Fe-4S</keyword>
<keyword id="KW-0093">Biotin biosynthesis</keyword>
<keyword id="KW-0408">Iron</keyword>
<keyword id="KW-0411">Iron-sulfur</keyword>
<keyword id="KW-0479">Metal-binding</keyword>
<keyword id="KW-0949">S-adenosyl-L-methionine</keyword>
<keyword id="KW-0808">Transferase</keyword>
<sequence>MTVEMNKSIVKAYSVLETGEPLPFDVAVELAHLAGEDVPDLLSLANKVKNRYATLSEGALHSCSIINAKSGVCAENCRFCAQSLHNSADVEQYSLLDAEAIVRSAGDVYDEGIRHFGVVTSGYGYRKVNPEFLKIVAIIDQLRQEYPDLNVCASLGILGEEPVRMLAEHNVRHYNINIQVAPDRYSDLIADSHPLKDRIDTIRLLRKYGIPVCCGGILGVGETMRERLDFIYALQELDIAVIPLNVLVPIEGTPLQGAATPALTDIVKTFALCRLVHPGKIIKFAAGRETVMNDFQGLLMLAGANGFLTGGYLTTRGRKIGDDREFMRQLAGFAEVSCS</sequence>
<organism>
    <name type="scientific">Chlorobium phaeobacteroides (strain BS1)</name>
    <dbReference type="NCBI Taxonomy" id="331678"/>
    <lineage>
        <taxon>Bacteria</taxon>
        <taxon>Pseudomonadati</taxon>
        <taxon>Chlorobiota</taxon>
        <taxon>Chlorobiia</taxon>
        <taxon>Chlorobiales</taxon>
        <taxon>Chlorobiaceae</taxon>
        <taxon>Chlorobium/Pelodictyon group</taxon>
        <taxon>Chlorobium</taxon>
    </lineage>
</organism>
<reference key="1">
    <citation type="submission" date="2008-06" db="EMBL/GenBank/DDBJ databases">
        <title>Complete sequence of Chlorobium phaeobacteroides BS1.</title>
        <authorList>
            <consortium name="US DOE Joint Genome Institute"/>
            <person name="Lucas S."/>
            <person name="Copeland A."/>
            <person name="Lapidus A."/>
            <person name="Glavina del Rio T."/>
            <person name="Dalin E."/>
            <person name="Tice H."/>
            <person name="Bruce D."/>
            <person name="Goodwin L."/>
            <person name="Pitluck S."/>
            <person name="Schmutz J."/>
            <person name="Larimer F."/>
            <person name="Land M."/>
            <person name="Hauser L."/>
            <person name="Kyrpides N."/>
            <person name="Ovchinnikova G."/>
            <person name="Li T."/>
            <person name="Liu Z."/>
            <person name="Zhao F."/>
            <person name="Overmann J."/>
            <person name="Bryant D.A."/>
            <person name="Richardson P."/>
        </authorList>
    </citation>
    <scope>NUCLEOTIDE SEQUENCE [LARGE SCALE GENOMIC DNA]</scope>
    <source>
        <strain>BS1</strain>
    </source>
</reference>
<name>BIOB_CHLPB</name>
<accession>B3EPW2</accession>